<feature type="chain" id="PRO_1000045882" description="Flagellar transcriptional regulator FlhD">
    <location>
        <begin position="1"/>
        <end position="107"/>
    </location>
</feature>
<feature type="disulfide bond" description="Interchain" evidence="1">
    <location>
        <position position="67"/>
    </location>
</feature>
<reference key="1">
    <citation type="journal article" date="2006" name="J. Bacteriol.">
        <title>Comparison of the genome sequence of the poultry pathogen Bordetella avium with those of B. bronchiseptica, B. pertussis, and B. parapertussis reveals extensive diversity in surface structures associated with host interaction.</title>
        <authorList>
            <person name="Sebaihia M."/>
            <person name="Preston A."/>
            <person name="Maskell D.J."/>
            <person name="Kuzmiak H."/>
            <person name="Connell T.D."/>
            <person name="King N.D."/>
            <person name="Orndorff P.E."/>
            <person name="Miyamoto D.M."/>
            <person name="Thomson N.R."/>
            <person name="Harris D."/>
            <person name="Goble A."/>
            <person name="Lord A."/>
            <person name="Murphy L."/>
            <person name="Quail M.A."/>
            <person name="Rutter S."/>
            <person name="Squares R."/>
            <person name="Squares S."/>
            <person name="Woodward J."/>
            <person name="Parkhill J."/>
            <person name="Temple L.M."/>
        </authorList>
    </citation>
    <scope>NUCLEOTIDE SEQUENCE [LARGE SCALE GENOMIC DNA]</scope>
    <source>
        <strain>197N</strain>
    </source>
</reference>
<organism>
    <name type="scientific">Bordetella avium (strain 197N)</name>
    <dbReference type="NCBI Taxonomy" id="360910"/>
    <lineage>
        <taxon>Bacteria</taxon>
        <taxon>Pseudomonadati</taxon>
        <taxon>Pseudomonadota</taxon>
        <taxon>Betaproteobacteria</taxon>
        <taxon>Burkholderiales</taxon>
        <taxon>Alcaligenaceae</taxon>
        <taxon>Bordetella</taxon>
    </lineage>
</organism>
<accession>Q2L1E5</accession>
<dbReference type="EMBL" id="AM167904">
    <property type="protein sequence ID" value="CAJ49278.1"/>
    <property type="molecule type" value="Genomic_DNA"/>
</dbReference>
<dbReference type="RefSeq" id="WP_012417339.1">
    <property type="nucleotide sequence ID" value="NC_010645.1"/>
</dbReference>
<dbReference type="SMR" id="Q2L1E5"/>
<dbReference type="STRING" id="360910.BAV1670"/>
<dbReference type="GeneID" id="92935269"/>
<dbReference type="KEGG" id="bav:BAV1670"/>
<dbReference type="eggNOG" id="ENOG5031P80">
    <property type="taxonomic scope" value="Bacteria"/>
</dbReference>
<dbReference type="HOGENOM" id="CLU_144160_1_0_4"/>
<dbReference type="OrthoDB" id="5298036at2"/>
<dbReference type="Proteomes" id="UP000001977">
    <property type="component" value="Chromosome"/>
</dbReference>
<dbReference type="GO" id="GO:0005737">
    <property type="term" value="C:cytoplasm"/>
    <property type="evidence" value="ECO:0007669"/>
    <property type="project" value="UniProtKB-SubCell"/>
</dbReference>
<dbReference type="GO" id="GO:0003677">
    <property type="term" value="F:DNA binding"/>
    <property type="evidence" value="ECO:0007669"/>
    <property type="project" value="UniProtKB-UniRule"/>
</dbReference>
<dbReference type="GO" id="GO:0044780">
    <property type="term" value="P:bacterial-type flagellum assembly"/>
    <property type="evidence" value="ECO:0007669"/>
    <property type="project" value="InterPro"/>
</dbReference>
<dbReference type="GO" id="GO:0045893">
    <property type="term" value="P:positive regulation of DNA-templated transcription"/>
    <property type="evidence" value="ECO:0007669"/>
    <property type="project" value="InterPro"/>
</dbReference>
<dbReference type="GO" id="GO:1902208">
    <property type="term" value="P:regulation of bacterial-type flagellum assembly"/>
    <property type="evidence" value="ECO:0007669"/>
    <property type="project" value="UniProtKB-UniRule"/>
</dbReference>
<dbReference type="Gene3D" id="1.10.4000.10">
    <property type="entry name" value="Flagellar transcriptional activator FlhD"/>
    <property type="match status" value="1"/>
</dbReference>
<dbReference type="HAMAP" id="MF_00725">
    <property type="entry name" value="FlhD"/>
    <property type="match status" value="1"/>
</dbReference>
<dbReference type="InterPro" id="IPR023559">
    <property type="entry name" value="Flagellar_FlhD"/>
</dbReference>
<dbReference type="InterPro" id="IPR036194">
    <property type="entry name" value="FlhD_sf"/>
</dbReference>
<dbReference type="NCBIfam" id="NF002783">
    <property type="entry name" value="PRK02909.1-1"/>
    <property type="match status" value="1"/>
</dbReference>
<dbReference type="Pfam" id="PF05247">
    <property type="entry name" value="FlhD"/>
    <property type="match status" value="1"/>
</dbReference>
<dbReference type="SUPFAM" id="SSF63592">
    <property type="entry name" value="Flagellar transcriptional activator FlhD"/>
    <property type="match status" value="1"/>
</dbReference>
<proteinExistence type="inferred from homology"/>
<protein>
    <recommendedName>
        <fullName evidence="1">Flagellar transcriptional regulator FlhD</fullName>
    </recommendedName>
</protein>
<keyword id="KW-0010">Activator</keyword>
<keyword id="KW-1005">Bacterial flagellum biogenesis</keyword>
<keyword id="KW-0963">Cytoplasm</keyword>
<keyword id="KW-1015">Disulfide bond</keyword>
<keyword id="KW-0238">DNA-binding</keyword>
<keyword id="KW-1185">Reference proteome</keyword>
<keyword id="KW-0804">Transcription</keyword>
<keyword id="KW-0805">Transcription regulation</keyword>
<name>FLHD_BORA1</name>
<evidence type="ECO:0000255" key="1">
    <source>
        <dbReference type="HAMAP-Rule" id="MF_00725"/>
    </source>
</evidence>
<gene>
    <name evidence="1" type="primary">flhD</name>
    <name type="ordered locus">BAV1670</name>
</gene>
<sequence length="107" mass="11753">MNTTDSSLLADIREVNLSYLLLAQRMLRQDHAASMFRLGFSTEVADILMRLSPAQLVKLASSSSVLCRFRFDDYGLLSALTQDVLGGALQQAHATILLAKQPVEEIA</sequence>
<comment type="function">
    <text evidence="1">Functions in complex with FlhC as a master transcriptional regulator that regulates transcription of several flagellar and non-flagellar operons by binding to their promoter region. Activates expression of class 2 flagellar genes, including fliA, which is a flagellum-specific sigma factor that turns on the class 3 genes. Also regulates genes whose products function in a variety of physiological pathways.</text>
</comment>
<comment type="subunit">
    <text evidence="1">Homodimer; disulfide-linked. Forms a heterohexamer composed of two FlhC and four FlhD subunits. Each FlhC binds a FlhD dimer, forming a heterotrimer, and a hexamer assembles by dimerization of two heterotrimers.</text>
</comment>
<comment type="subcellular location">
    <subcellularLocation>
        <location evidence="1">Cytoplasm</location>
    </subcellularLocation>
</comment>
<comment type="domain">
    <text evidence="1">The C-terminal region contains a putative helix-turn-helix (HTH) motif, suggesting that this region may bind DNA.</text>
</comment>
<comment type="similarity">
    <text evidence="1">Belongs to the FlhD family.</text>
</comment>